<protein>
    <recommendedName>
        <fullName evidence="1">Protein TusB</fullName>
    </recommendedName>
    <alternativeName>
        <fullName evidence="1">tRNA 2-thiouridine synthesizing protein B</fullName>
    </alternativeName>
</protein>
<dbReference type="EMBL" id="CP001120">
    <property type="protein sequence ID" value="ACF66047.1"/>
    <property type="molecule type" value="Genomic_DNA"/>
</dbReference>
<dbReference type="RefSeq" id="WP_000903400.1">
    <property type="nucleotide sequence ID" value="NC_011083.1"/>
</dbReference>
<dbReference type="SMR" id="B4TKM4"/>
<dbReference type="KEGG" id="seh:SeHA_C3754"/>
<dbReference type="HOGENOM" id="CLU_166087_2_1_6"/>
<dbReference type="Proteomes" id="UP000001866">
    <property type="component" value="Chromosome"/>
</dbReference>
<dbReference type="GO" id="GO:1990228">
    <property type="term" value="C:sulfurtransferase complex"/>
    <property type="evidence" value="ECO:0007669"/>
    <property type="project" value="TreeGrafter"/>
</dbReference>
<dbReference type="GO" id="GO:0002143">
    <property type="term" value="P:tRNA wobble position uridine thiolation"/>
    <property type="evidence" value="ECO:0007669"/>
    <property type="project" value="InterPro"/>
</dbReference>
<dbReference type="FunFam" id="3.40.1260.10:FF:000002">
    <property type="entry name" value="Sulfurtransferase TusB"/>
    <property type="match status" value="1"/>
</dbReference>
<dbReference type="Gene3D" id="3.40.1260.10">
    <property type="entry name" value="DsrEFH-like"/>
    <property type="match status" value="1"/>
</dbReference>
<dbReference type="HAMAP" id="MF_01564">
    <property type="entry name" value="Thiourid_synth_B"/>
    <property type="match status" value="1"/>
</dbReference>
<dbReference type="InterPro" id="IPR027396">
    <property type="entry name" value="DsrEFH-like"/>
</dbReference>
<dbReference type="InterPro" id="IPR023526">
    <property type="entry name" value="Sulphur_relay_TusB"/>
</dbReference>
<dbReference type="InterPro" id="IPR007215">
    <property type="entry name" value="Sulphur_relay_TusB/DsrH"/>
</dbReference>
<dbReference type="NCBIfam" id="NF010035">
    <property type="entry name" value="PRK13510.1"/>
    <property type="match status" value="1"/>
</dbReference>
<dbReference type="NCBIfam" id="TIGR03011">
    <property type="entry name" value="sulf_tusB_dsrH"/>
    <property type="match status" value="1"/>
</dbReference>
<dbReference type="PANTHER" id="PTHR37526">
    <property type="entry name" value="PROTEIN TUSB"/>
    <property type="match status" value="1"/>
</dbReference>
<dbReference type="PANTHER" id="PTHR37526:SF1">
    <property type="entry name" value="PROTEIN TUSB"/>
    <property type="match status" value="1"/>
</dbReference>
<dbReference type="Pfam" id="PF04077">
    <property type="entry name" value="DsrH"/>
    <property type="match status" value="1"/>
</dbReference>
<dbReference type="SUPFAM" id="SSF75169">
    <property type="entry name" value="DsrEFH-like"/>
    <property type="match status" value="1"/>
</dbReference>
<keyword id="KW-0963">Cytoplasm</keyword>
<keyword id="KW-0819">tRNA processing</keyword>
<evidence type="ECO:0000255" key="1">
    <source>
        <dbReference type="HAMAP-Rule" id="MF_01564"/>
    </source>
</evidence>
<gene>
    <name evidence="1" type="primary">tusB</name>
    <name type="ordered locus">SeHA_C3754</name>
</gene>
<comment type="function">
    <text evidence="1">Part of a sulfur-relay system required for 2-thiolation of 5-methylaminomethyl-2-thiouridine (mnm(5)s(2)U) at tRNA wobble positions.</text>
</comment>
<comment type="subunit">
    <text evidence="1">Heterohexamer, formed by a dimer of trimers. The hexameric TusBCD complex contains 2 copies each of TusB, TusC and TusD. The TusBCD complex interacts with TusE.</text>
</comment>
<comment type="subcellular location">
    <subcellularLocation>
        <location evidence="1">Cytoplasm</location>
    </subcellularLocation>
</comment>
<comment type="similarity">
    <text evidence="1">Belongs to the DsrH/TusB family.</text>
</comment>
<reference key="1">
    <citation type="journal article" date="2011" name="J. Bacteriol.">
        <title>Comparative genomics of 28 Salmonella enterica isolates: evidence for CRISPR-mediated adaptive sublineage evolution.</title>
        <authorList>
            <person name="Fricke W.F."/>
            <person name="Mammel M.K."/>
            <person name="McDermott P.F."/>
            <person name="Tartera C."/>
            <person name="White D.G."/>
            <person name="Leclerc J.E."/>
            <person name="Ravel J."/>
            <person name="Cebula T.A."/>
        </authorList>
    </citation>
    <scope>NUCLEOTIDE SEQUENCE [LARGE SCALE GENOMIC DNA]</scope>
    <source>
        <strain>SL476</strain>
    </source>
</reference>
<name>TUSB_SALHS</name>
<organism>
    <name type="scientific">Salmonella heidelberg (strain SL476)</name>
    <dbReference type="NCBI Taxonomy" id="454169"/>
    <lineage>
        <taxon>Bacteria</taxon>
        <taxon>Pseudomonadati</taxon>
        <taxon>Pseudomonadota</taxon>
        <taxon>Gammaproteobacteria</taxon>
        <taxon>Enterobacterales</taxon>
        <taxon>Enterobacteriaceae</taxon>
        <taxon>Salmonella</taxon>
    </lineage>
</organism>
<feature type="chain" id="PRO_1000147190" description="Protein TusB">
    <location>
        <begin position="1"/>
        <end position="95"/>
    </location>
</feature>
<sequence length="95" mass="10532">MLHTLPHCASSVDFPALLRLLKEGDALLLLQDGVTVAIEGNRFLESLRDAPITVYALKEDIDARGLGGQISDSVVRVDYTEFVRLTVKYANQMAW</sequence>
<accession>B4TKM4</accession>
<proteinExistence type="inferred from homology"/>